<name>RS17_THIDA</name>
<dbReference type="EMBL" id="CP000116">
    <property type="protein sequence ID" value="AAZ96367.1"/>
    <property type="molecule type" value="Genomic_DNA"/>
</dbReference>
<dbReference type="RefSeq" id="WP_011310926.1">
    <property type="nucleotide sequence ID" value="NC_007404.1"/>
</dbReference>
<dbReference type="SMR" id="Q3SLP0"/>
<dbReference type="STRING" id="292415.Tbd_0414"/>
<dbReference type="KEGG" id="tbd:Tbd_0414"/>
<dbReference type="eggNOG" id="COG0186">
    <property type="taxonomic scope" value="Bacteria"/>
</dbReference>
<dbReference type="HOGENOM" id="CLU_073626_1_1_4"/>
<dbReference type="OrthoDB" id="9811714at2"/>
<dbReference type="Proteomes" id="UP000008291">
    <property type="component" value="Chromosome"/>
</dbReference>
<dbReference type="GO" id="GO:0022627">
    <property type="term" value="C:cytosolic small ribosomal subunit"/>
    <property type="evidence" value="ECO:0007669"/>
    <property type="project" value="TreeGrafter"/>
</dbReference>
<dbReference type="GO" id="GO:0019843">
    <property type="term" value="F:rRNA binding"/>
    <property type="evidence" value="ECO:0007669"/>
    <property type="project" value="UniProtKB-UniRule"/>
</dbReference>
<dbReference type="GO" id="GO:0003735">
    <property type="term" value="F:structural constituent of ribosome"/>
    <property type="evidence" value="ECO:0007669"/>
    <property type="project" value="InterPro"/>
</dbReference>
<dbReference type="GO" id="GO:0006412">
    <property type="term" value="P:translation"/>
    <property type="evidence" value="ECO:0007669"/>
    <property type="project" value="UniProtKB-UniRule"/>
</dbReference>
<dbReference type="CDD" id="cd00364">
    <property type="entry name" value="Ribosomal_uS17"/>
    <property type="match status" value="1"/>
</dbReference>
<dbReference type="Gene3D" id="2.40.50.140">
    <property type="entry name" value="Nucleic acid-binding proteins"/>
    <property type="match status" value="1"/>
</dbReference>
<dbReference type="HAMAP" id="MF_01345_B">
    <property type="entry name" value="Ribosomal_uS17_B"/>
    <property type="match status" value="1"/>
</dbReference>
<dbReference type="InterPro" id="IPR012340">
    <property type="entry name" value="NA-bd_OB-fold"/>
</dbReference>
<dbReference type="InterPro" id="IPR000266">
    <property type="entry name" value="Ribosomal_uS17"/>
</dbReference>
<dbReference type="InterPro" id="IPR019984">
    <property type="entry name" value="Ribosomal_uS17_bact/chlr"/>
</dbReference>
<dbReference type="NCBIfam" id="NF004123">
    <property type="entry name" value="PRK05610.1"/>
    <property type="match status" value="1"/>
</dbReference>
<dbReference type="NCBIfam" id="TIGR03635">
    <property type="entry name" value="uS17_bact"/>
    <property type="match status" value="1"/>
</dbReference>
<dbReference type="PANTHER" id="PTHR10744">
    <property type="entry name" value="40S RIBOSOMAL PROTEIN S11 FAMILY MEMBER"/>
    <property type="match status" value="1"/>
</dbReference>
<dbReference type="PANTHER" id="PTHR10744:SF1">
    <property type="entry name" value="SMALL RIBOSOMAL SUBUNIT PROTEIN US17M"/>
    <property type="match status" value="1"/>
</dbReference>
<dbReference type="Pfam" id="PF00366">
    <property type="entry name" value="Ribosomal_S17"/>
    <property type="match status" value="1"/>
</dbReference>
<dbReference type="PRINTS" id="PR00973">
    <property type="entry name" value="RIBOSOMALS17"/>
</dbReference>
<dbReference type="SUPFAM" id="SSF50249">
    <property type="entry name" value="Nucleic acid-binding proteins"/>
    <property type="match status" value="1"/>
</dbReference>
<evidence type="ECO:0000255" key="1">
    <source>
        <dbReference type="HAMAP-Rule" id="MF_01345"/>
    </source>
</evidence>
<evidence type="ECO:0000305" key="2"/>
<sequence>MSEIKKVVRTLTGRVVSDKMNKTVTVLVERRVKHPVIGKVIRMSKKYHAHDENNECHEGDTVQIEESRKLSRTKAWTVSKLVERARV</sequence>
<comment type="function">
    <text evidence="1">One of the primary rRNA binding proteins, it binds specifically to the 5'-end of 16S ribosomal RNA.</text>
</comment>
<comment type="subunit">
    <text evidence="1">Part of the 30S ribosomal subunit.</text>
</comment>
<comment type="similarity">
    <text evidence="1">Belongs to the universal ribosomal protein uS17 family.</text>
</comment>
<protein>
    <recommendedName>
        <fullName evidence="1">Small ribosomal subunit protein uS17</fullName>
    </recommendedName>
    <alternativeName>
        <fullName evidence="2">30S ribosomal protein S17</fullName>
    </alternativeName>
</protein>
<organism>
    <name type="scientific">Thiobacillus denitrificans (strain ATCC 25259 / T1)</name>
    <dbReference type="NCBI Taxonomy" id="292415"/>
    <lineage>
        <taxon>Bacteria</taxon>
        <taxon>Pseudomonadati</taxon>
        <taxon>Pseudomonadota</taxon>
        <taxon>Betaproteobacteria</taxon>
        <taxon>Nitrosomonadales</taxon>
        <taxon>Thiobacillaceae</taxon>
        <taxon>Thiobacillus</taxon>
    </lineage>
</organism>
<reference key="1">
    <citation type="journal article" date="2006" name="J. Bacteriol.">
        <title>The genome sequence of the obligately chemolithoautotrophic, facultatively anaerobic bacterium Thiobacillus denitrificans.</title>
        <authorList>
            <person name="Beller H.R."/>
            <person name="Chain P.S."/>
            <person name="Letain T.E."/>
            <person name="Chakicherla A."/>
            <person name="Larimer F.W."/>
            <person name="Richardson P.M."/>
            <person name="Coleman M.A."/>
            <person name="Wood A.P."/>
            <person name="Kelly D.P."/>
        </authorList>
    </citation>
    <scope>NUCLEOTIDE SEQUENCE [LARGE SCALE GENOMIC DNA]</scope>
    <source>
        <strain>ATCC 25259 / T1</strain>
    </source>
</reference>
<keyword id="KW-1185">Reference proteome</keyword>
<keyword id="KW-0687">Ribonucleoprotein</keyword>
<keyword id="KW-0689">Ribosomal protein</keyword>
<keyword id="KW-0694">RNA-binding</keyword>
<keyword id="KW-0699">rRNA-binding</keyword>
<accession>Q3SLP0</accession>
<feature type="chain" id="PRO_0000233596" description="Small ribosomal subunit protein uS17">
    <location>
        <begin position="1"/>
        <end position="87"/>
    </location>
</feature>
<gene>
    <name evidence="1" type="primary">rpsQ</name>
    <name type="ordered locus">Tbd_0414</name>
</gene>
<proteinExistence type="inferred from homology"/>